<gene>
    <name type="ordered locus">HI_1680</name>
</gene>
<name>Y1680_HAEIN</name>
<evidence type="ECO:0000255" key="1"/>
<evidence type="ECO:0000305" key="2"/>
<comment type="subcellular location">
    <subcellularLocation>
        <location evidence="2">Cell membrane</location>
        <topology evidence="2">Multi-pass membrane protein</topology>
    </subcellularLocation>
</comment>
<comment type="similarity">
    <text evidence="2">Belongs to the YccS/YhfK family.</text>
</comment>
<sequence length="718" mass="82374">MNIRLNAKVISTIPVFIAVNIAAVGIWFFDISSQSMPLILGIIAGGLVDLDNRLTGRLKNVFFTLIAFSISSFIVQLHIGKPIQYIVLMTVLTFIFTMIGAVGQRYSTIAFGSLVVALYTTLTYIPEVNVWFINPVMILCGTLLYSVVTLIVYLFFPNRPVQESVAKAFCALGEYLDTKSCFFDPDEVAEIEKKHLNFAMKNANVVTAFNIVRTALFYRIRGQHRHPLTQRMLRYYFAAQDIHERANSTHFDYQQITEKLKNTDLIFRIQRLLELQAQSCKEITASLRENKPYHFNKRVERALLGTLHSFDLYRAQHLNDQDELIDIQTLLDNLQSINWQLRQLAQDTTVTEQLAQIHTEQITGLKNISAVIFSHFTFESPLFRHAVRLSIVVFLCCAIVEFFQFNLGYWILLTTVFVCQPNYSATKVRLRQRIIGTILGVVVGSLLPYLNPTLELKLGLVVLTSTLFFFFRSNNYSFSTFFITLQVLLSFDVMGFDTAAALMPRLLDTLLGAAISWFAVSYLWPDWKYLQLDKVSHQALRSDAVYLLHIISQLQFGKSDDLKYRIARRNAHQYAAALSTTLSNMNNEPVKYKAYLQKGFDLLKLNYSLLSYISALGAYRDRMKNLQQTAQFLSGFYPVAKKIIYTLEHIEEIPEAIFNQQQESIETHLKELEKQEMTAEERAVFSLPYQQLNLITQLLPQFYGYFKKEINCQSAGAL</sequence>
<reference key="1">
    <citation type="journal article" date="1995" name="Science">
        <title>Whole-genome random sequencing and assembly of Haemophilus influenzae Rd.</title>
        <authorList>
            <person name="Fleischmann R.D."/>
            <person name="Adams M.D."/>
            <person name="White O."/>
            <person name="Clayton R.A."/>
            <person name="Kirkness E.F."/>
            <person name="Kerlavage A.R."/>
            <person name="Bult C.J."/>
            <person name="Tomb J.-F."/>
            <person name="Dougherty B.A."/>
            <person name="Merrick J.M."/>
            <person name="McKenney K."/>
            <person name="Sutton G.G."/>
            <person name="FitzHugh W."/>
            <person name="Fields C.A."/>
            <person name="Gocayne J.D."/>
            <person name="Scott J.D."/>
            <person name="Shirley R."/>
            <person name="Liu L.-I."/>
            <person name="Glodek A."/>
            <person name="Kelley J.M."/>
            <person name="Weidman J.F."/>
            <person name="Phillips C.A."/>
            <person name="Spriggs T."/>
            <person name="Hedblom E."/>
            <person name="Cotton M.D."/>
            <person name="Utterback T.R."/>
            <person name="Hanna M.C."/>
            <person name="Nguyen D.T."/>
            <person name="Saudek D.M."/>
            <person name="Brandon R.C."/>
            <person name="Fine L.D."/>
            <person name="Fritchman J.L."/>
            <person name="Fuhrmann J.L."/>
            <person name="Geoghagen N.S.M."/>
            <person name="Gnehm C.L."/>
            <person name="McDonald L.A."/>
            <person name="Small K.V."/>
            <person name="Fraser C.M."/>
            <person name="Smith H.O."/>
            <person name="Venter J.C."/>
        </authorList>
    </citation>
    <scope>NUCLEOTIDE SEQUENCE [LARGE SCALE GENOMIC DNA]</scope>
    <source>
        <strain>ATCC 51907 / DSM 11121 / KW20 / Rd</strain>
    </source>
</reference>
<keyword id="KW-1003">Cell membrane</keyword>
<keyword id="KW-0472">Membrane</keyword>
<keyword id="KW-1185">Reference proteome</keyword>
<keyword id="KW-0812">Transmembrane</keyword>
<keyword id="KW-1133">Transmembrane helix</keyword>
<dbReference type="EMBL" id="L42023">
    <property type="protein sequence ID" value="AAC23326.1"/>
    <property type="molecule type" value="Genomic_DNA"/>
</dbReference>
<dbReference type="PIR" id="B64040">
    <property type="entry name" value="B64040"/>
</dbReference>
<dbReference type="RefSeq" id="NP_439822.1">
    <property type="nucleotide sequence ID" value="NC_000907.1"/>
</dbReference>
<dbReference type="STRING" id="71421.HI_1680"/>
<dbReference type="EnsemblBacteria" id="AAC23326">
    <property type="protein sequence ID" value="AAC23326"/>
    <property type="gene ID" value="HI_1680"/>
</dbReference>
<dbReference type="KEGG" id="hin:HI_1680"/>
<dbReference type="PATRIC" id="fig|71421.8.peg.1759"/>
<dbReference type="eggNOG" id="COG1289">
    <property type="taxonomic scope" value="Bacteria"/>
</dbReference>
<dbReference type="HOGENOM" id="CLU_013315_1_0_6"/>
<dbReference type="OrthoDB" id="8670769at2"/>
<dbReference type="PhylomeDB" id="P44289"/>
<dbReference type="BioCyc" id="HINF71421:G1GJ1-1696-MONOMER"/>
<dbReference type="Proteomes" id="UP000000579">
    <property type="component" value="Chromosome"/>
</dbReference>
<dbReference type="GO" id="GO:0005886">
    <property type="term" value="C:plasma membrane"/>
    <property type="evidence" value="ECO:0000318"/>
    <property type="project" value="GO_Central"/>
</dbReference>
<dbReference type="InterPro" id="IPR010019">
    <property type="entry name" value="Integral_membrane_YccS"/>
</dbReference>
<dbReference type="InterPro" id="IPR010020">
    <property type="entry name" value="Integral_membrane_YCCS_YHJK"/>
</dbReference>
<dbReference type="InterPro" id="IPR049453">
    <property type="entry name" value="Memb_transporter_dom"/>
</dbReference>
<dbReference type="InterPro" id="IPR032692">
    <property type="entry name" value="YccS_N"/>
</dbReference>
<dbReference type="NCBIfam" id="TIGR01666">
    <property type="entry name" value="YCCS"/>
    <property type="match status" value="1"/>
</dbReference>
<dbReference type="NCBIfam" id="TIGR01667">
    <property type="entry name" value="YCCS_YHFK"/>
    <property type="match status" value="1"/>
</dbReference>
<dbReference type="PANTHER" id="PTHR30509:SF8">
    <property type="entry name" value="INNER MEMBRANE PROTEIN YCCS"/>
    <property type="match status" value="1"/>
</dbReference>
<dbReference type="PANTHER" id="PTHR30509">
    <property type="entry name" value="P-HYDROXYBENZOIC ACID EFFLUX PUMP SUBUNIT-RELATED"/>
    <property type="match status" value="1"/>
</dbReference>
<dbReference type="Pfam" id="PF12805">
    <property type="entry name" value="FUSC-like"/>
    <property type="match status" value="1"/>
</dbReference>
<dbReference type="Pfam" id="PF13515">
    <property type="entry name" value="FUSC_2"/>
    <property type="match status" value="1"/>
</dbReference>
<protein>
    <recommendedName>
        <fullName>Uncharacterized protein HI_1680</fullName>
    </recommendedName>
</protein>
<organism>
    <name type="scientific">Haemophilus influenzae (strain ATCC 51907 / DSM 11121 / KW20 / Rd)</name>
    <dbReference type="NCBI Taxonomy" id="71421"/>
    <lineage>
        <taxon>Bacteria</taxon>
        <taxon>Pseudomonadati</taxon>
        <taxon>Pseudomonadota</taxon>
        <taxon>Gammaproteobacteria</taxon>
        <taxon>Pasteurellales</taxon>
        <taxon>Pasteurellaceae</taxon>
        <taxon>Haemophilus</taxon>
    </lineage>
</organism>
<accession>P44289</accession>
<proteinExistence type="inferred from homology"/>
<feature type="chain" id="PRO_0000168794" description="Uncharacterized protein HI_1680">
    <location>
        <begin position="1"/>
        <end position="718"/>
    </location>
</feature>
<feature type="transmembrane region" description="Helical" evidence="1">
    <location>
        <begin position="9"/>
        <end position="29"/>
    </location>
</feature>
<feature type="transmembrane region" description="Helical" evidence="1">
    <location>
        <begin position="60"/>
        <end position="80"/>
    </location>
</feature>
<feature type="transmembrane region" description="Helical" evidence="1">
    <location>
        <begin position="83"/>
        <end position="103"/>
    </location>
</feature>
<feature type="transmembrane region" description="Helical" evidence="1">
    <location>
        <begin position="136"/>
        <end position="156"/>
    </location>
</feature>
<feature type="transmembrane region" description="Helical" evidence="1">
    <location>
        <begin position="391"/>
        <end position="411"/>
    </location>
</feature>
<feature type="transmembrane region" description="Helical" evidence="1">
    <location>
        <begin position="506"/>
        <end position="526"/>
    </location>
</feature>